<gene>
    <name evidence="1" type="primary">accD</name>
    <name type="ordered locus">OB2174</name>
</gene>
<protein>
    <recommendedName>
        <fullName evidence="1">Acetyl-coenzyme A carboxylase carboxyl transferase subunit beta</fullName>
        <shortName evidence="1">ACCase subunit beta</shortName>
        <shortName evidence="1">Acetyl-CoA carboxylase carboxyltransferase subunit beta</shortName>
        <ecNumber evidence="1">2.1.3.15</ecNumber>
    </recommendedName>
</protein>
<evidence type="ECO:0000255" key="1">
    <source>
        <dbReference type="HAMAP-Rule" id="MF_01395"/>
    </source>
</evidence>
<evidence type="ECO:0000255" key="2">
    <source>
        <dbReference type="PROSITE-ProRule" id="PRU01136"/>
    </source>
</evidence>
<keyword id="KW-0067">ATP-binding</keyword>
<keyword id="KW-0963">Cytoplasm</keyword>
<keyword id="KW-0275">Fatty acid biosynthesis</keyword>
<keyword id="KW-0276">Fatty acid metabolism</keyword>
<keyword id="KW-0444">Lipid biosynthesis</keyword>
<keyword id="KW-0443">Lipid metabolism</keyword>
<keyword id="KW-0479">Metal-binding</keyword>
<keyword id="KW-0547">Nucleotide-binding</keyword>
<keyword id="KW-1185">Reference proteome</keyword>
<keyword id="KW-0808">Transferase</keyword>
<keyword id="KW-0862">Zinc</keyword>
<keyword id="KW-0863">Zinc-finger</keyword>
<comment type="function">
    <text evidence="1">Component of the acetyl coenzyme A carboxylase (ACC) complex. Biotin carboxylase (BC) catalyzes the carboxylation of biotin on its carrier protein (BCCP) and then the CO(2) group is transferred by the transcarboxylase to acetyl-CoA to form malonyl-CoA.</text>
</comment>
<comment type="catalytic activity">
    <reaction evidence="1">
        <text>N(6)-carboxybiotinyl-L-lysyl-[protein] + acetyl-CoA = N(6)-biotinyl-L-lysyl-[protein] + malonyl-CoA</text>
        <dbReference type="Rhea" id="RHEA:54728"/>
        <dbReference type="Rhea" id="RHEA-COMP:10505"/>
        <dbReference type="Rhea" id="RHEA-COMP:10506"/>
        <dbReference type="ChEBI" id="CHEBI:57288"/>
        <dbReference type="ChEBI" id="CHEBI:57384"/>
        <dbReference type="ChEBI" id="CHEBI:83144"/>
        <dbReference type="ChEBI" id="CHEBI:83145"/>
        <dbReference type="EC" id="2.1.3.15"/>
    </reaction>
</comment>
<comment type="cofactor">
    <cofactor evidence="1">
        <name>Zn(2+)</name>
        <dbReference type="ChEBI" id="CHEBI:29105"/>
    </cofactor>
    <text evidence="1">Binds 1 zinc ion per subunit.</text>
</comment>
<comment type="pathway">
    <text evidence="1">Lipid metabolism; malonyl-CoA biosynthesis; malonyl-CoA from acetyl-CoA: step 1/1.</text>
</comment>
<comment type="subunit">
    <text evidence="1">Acetyl-CoA carboxylase is a heterohexamer composed of biotin carboxyl carrier protein (AccB), biotin carboxylase (AccC) and two subunits each of ACCase subunit alpha (AccA) and ACCase subunit beta (AccD).</text>
</comment>
<comment type="subcellular location">
    <subcellularLocation>
        <location evidence="1">Cytoplasm</location>
    </subcellularLocation>
</comment>
<comment type="similarity">
    <text evidence="1">Belongs to the AccD/PCCB family.</text>
</comment>
<name>ACCD_OCEIH</name>
<sequence length="286" mass="32004">MLKDLFGKRKKYASIPSEKAKMDVPEGLMQKCSNCKKIYYRKEMVKALQVCPNCDYHHPMTAWDRIDSLFDNGTFEEWDKEITSANPLDFPEYESKIAKDREKTSLSEGVVTGKGKVNNVQIAFAVMDSHFRMGSMGSAIGEKITRAIEAAREESIPFVIFTASGGARMQEGVLSLMQMAKTSFAVKRFRDSGGLMISVMTHPTTGGVSASFASIGDYNFAEPGALIGFAGRRIIEQTIREKLPSDFQTAEFQLHHGQVDKVIHRQDMNDTLGKLLKMHMDGRQLK</sequence>
<organism>
    <name type="scientific">Oceanobacillus iheyensis (strain DSM 14371 / CIP 107618 / JCM 11309 / KCTC 3954 / HTE831)</name>
    <dbReference type="NCBI Taxonomy" id="221109"/>
    <lineage>
        <taxon>Bacteria</taxon>
        <taxon>Bacillati</taxon>
        <taxon>Bacillota</taxon>
        <taxon>Bacilli</taxon>
        <taxon>Bacillales</taxon>
        <taxon>Bacillaceae</taxon>
        <taxon>Oceanobacillus</taxon>
    </lineage>
</organism>
<proteinExistence type="inferred from homology"/>
<dbReference type="EC" id="2.1.3.15" evidence="1"/>
<dbReference type="EMBL" id="BA000028">
    <property type="protein sequence ID" value="BAC14130.1"/>
    <property type="molecule type" value="Genomic_DNA"/>
</dbReference>
<dbReference type="RefSeq" id="WP_011066568.1">
    <property type="nucleotide sequence ID" value="NC_004193.1"/>
</dbReference>
<dbReference type="SMR" id="Q8EPD4"/>
<dbReference type="STRING" id="221109.gene:10734422"/>
<dbReference type="KEGG" id="oih:OB2174"/>
<dbReference type="eggNOG" id="COG0777">
    <property type="taxonomic scope" value="Bacteria"/>
</dbReference>
<dbReference type="HOGENOM" id="CLU_015486_1_1_9"/>
<dbReference type="OrthoDB" id="9772975at2"/>
<dbReference type="PhylomeDB" id="Q8EPD4"/>
<dbReference type="UniPathway" id="UPA00655">
    <property type="reaction ID" value="UER00711"/>
</dbReference>
<dbReference type="Proteomes" id="UP000000822">
    <property type="component" value="Chromosome"/>
</dbReference>
<dbReference type="GO" id="GO:0009317">
    <property type="term" value="C:acetyl-CoA carboxylase complex"/>
    <property type="evidence" value="ECO:0007669"/>
    <property type="project" value="InterPro"/>
</dbReference>
<dbReference type="GO" id="GO:0003989">
    <property type="term" value="F:acetyl-CoA carboxylase activity"/>
    <property type="evidence" value="ECO:0007669"/>
    <property type="project" value="InterPro"/>
</dbReference>
<dbReference type="GO" id="GO:0005524">
    <property type="term" value="F:ATP binding"/>
    <property type="evidence" value="ECO:0007669"/>
    <property type="project" value="UniProtKB-KW"/>
</dbReference>
<dbReference type="GO" id="GO:0016743">
    <property type="term" value="F:carboxyl- or carbamoyltransferase activity"/>
    <property type="evidence" value="ECO:0007669"/>
    <property type="project" value="UniProtKB-UniRule"/>
</dbReference>
<dbReference type="GO" id="GO:0008270">
    <property type="term" value="F:zinc ion binding"/>
    <property type="evidence" value="ECO:0007669"/>
    <property type="project" value="UniProtKB-UniRule"/>
</dbReference>
<dbReference type="GO" id="GO:0006633">
    <property type="term" value="P:fatty acid biosynthetic process"/>
    <property type="evidence" value="ECO:0007669"/>
    <property type="project" value="UniProtKB-KW"/>
</dbReference>
<dbReference type="GO" id="GO:2001295">
    <property type="term" value="P:malonyl-CoA biosynthetic process"/>
    <property type="evidence" value="ECO:0007669"/>
    <property type="project" value="UniProtKB-UniRule"/>
</dbReference>
<dbReference type="Gene3D" id="3.90.226.10">
    <property type="entry name" value="2-enoyl-CoA Hydratase, Chain A, domain 1"/>
    <property type="match status" value="1"/>
</dbReference>
<dbReference type="HAMAP" id="MF_01395">
    <property type="entry name" value="AcetylCoA_CT_beta"/>
    <property type="match status" value="1"/>
</dbReference>
<dbReference type="InterPro" id="IPR034733">
    <property type="entry name" value="AcCoA_carboxyl_beta"/>
</dbReference>
<dbReference type="InterPro" id="IPR000438">
    <property type="entry name" value="Acetyl_CoA_COase_Trfase_b_su"/>
</dbReference>
<dbReference type="InterPro" id="IPR029045">
    <property type="entry name" value="ClpP/crotonase-like_dom_sf"/>
</dbReference>
<dbReference type="InterPro" id="IPR011762">
    <property type="entry name" value="COA_CT_N"/>
</dbReference>
<dbReference type="NCBIfam" id="TIGR00515">
    <property type="entry name" value="accD"/>
    <property type="match status" value="1"/>
</dbReference>
<dbReference type="PANTHER" id="PTHR42995">
    <property type="entry name" value="ACETYL-COENZYME A CARBOXYLASE CARBOXYL TRANSFERASE SUBUNIT BETA, CHLOROPLASTIC"/>
    <property type="match status" value="1"/>
</dbReference>
<dbReference type="PANTHER" id="PTHR42995:SF5">
    <property type="entry name" value="ACETYL-COENZYME A CARBOXYLASE CARBOXYL TRANSFERASE SUBUNIT BETA, CHLOROPLASTIC"/>
    <property type="match status" value="1"/>
</dbReference>
<dbReference type="Pfam" id="PF01039">
    <property type="entry name" value="Carboxyl_trans"/>
    <property type="match status" value="1"/>
</dbReference>
<dbReference type="PRINTS" id="PR01070">
    <property type="entry name" value="ACCCTRFRASEB"/>
</dbReference>
<dbReference type="SUPFAM" id="SSF52096">
    <property type="entry name" value="ClpP/crotonase"/>
    <property type="match status" value="1"/>
</dbReference>
<dbReference type="PROSITE" id="PS50980">
    <property type="entry name" value="COA_CT_NTER"/>
    <property type="match status" value="1"/>
</dbReference>
<reference key="1">
    <citation type="journal article" date="2002" name="Nucleic Acids Res.">
        <title>Genome sequence of Oceanobacillus iheyensis isolated from the Iheya Ridge and its unexpected adaptive capabilities to extreme environments.</title>
        <authorList>
            <person name="Takami H."/>
            <person name="Takaki Y."/>
            <person name="Uchiyama I."/>
        </authorList>
    </citation>
    <scope>NUCLEOTIDE SEQUENCE [LARGE SCALE GENOMIC DNA]</scope>
    <source>
        <strain>DSM 14371 / CIP 107618 / JCM 11309 / KCTC 3954 / HTE831</strain>
    </source>
</reference>
<accession>Q8EPD4</accession>
<feature type="chain" id="PRO_0000389805" description="Acetyl-coenzyme A carboxylase carboxyl transferase subunit beta">
    <location>
        <begin position="1"/>
        <end position="286"/>
    </location>
</feature>
<feature type="domain" description="CoA carboxyltransferase N-terminal" evidence="2">
    <location>
        <begin position="28"/>
        <end position="286"/>
    </location>
</feature>
<feature type="zinc finger region" description="C4-type" evidence="1">
    <location>
        <begin position="32"/>
        <end position="54"/>
    </location>
</feature>
<feature type="binding site" evidence="1">
    <location>
        <position position="32"/>
    </location>
    <ligand>
        <name>Zn(2+)</name>
        <dbReference type="ChEBI" id="CHEBI:29105"/>
    </ligand>
</feature>
<feature type="binding site" evidence="1">
    <location>
        <position position="35"/>
    </location>
    <ligand>
        <name>Zn(2+)</name>
        <dbReference type="ChEBI" id="CHEBI:29105"/>
    </ligand>
</feature>
<feature type="binding site" evidence="1">
    <location>
        <position position="51"/>
    </location>
    <ligand>
        <name>Zn(2+)</name>
        <dbReference type="ChEBI" id="CHEBI:29105"/>
    </ligand>
</feature>
<feature type="binding site" evidence="1">
    <location>
        <position position="54"/>
    </location>
    <ligand>
        <name>Zn(2+)</name>
        <dbReference type="ChEBI" id="CHEBI:29105"/>
    </ligand>
</feature>